<comment type="function">
    <text evidence="1">Binds the 23S rRNA.</text>
</comment>
<comment type="subunit">
    <text evidence="1">Part of the 50S ribosomal subunit.</text>
</comment>
<comment type="similarity">
    <text evidence="1">Belongs to the bacterial ribosomal protein bL31 family. Type A subfamily.</text>
</comment>
<evidence type="ECO:0000255" key="1">
    <source>
        <dbReference type="HAMAP-Rule" id="MF_00501"/>
    </source>
</evidence>
<evidence type="ECO:0000256" key="2">
    <source>
        <dbReference type="SAM" id="MobiDB-lite"/>
    </source>
</evidence>
<evidence type="ECO:0000305" key="3"/>
<organism>
    <name type="scientific">Acaryochloris marina (strain MBIC 11017)</name>
    <dbReference type="NCBI Taxonomy" id="329726"/>
    <lineage>
        <taxon>Bacteria</taxon>
        <taxon>Bacillati</taxon>
        <taxon>Cyanobacteriota</taxon>
        <taxon>Cyanophyceae</taxon>
        <taxon>Acaryochloridales</taxon>
        <taxon>Acaryochloridaceae</taxon>
        <taxon>Acaryochloris</taxon>
    </lineage>
</organism>
<gene>
    <name evidence="1" type="primary">rpmE</name>
    <name evidence="1" type="synonym">rpl31</name>
    <name type="ordered locus">AM1_1248</name>
</gene>
<protein>
    <recommendedName>
        <fullName evidence="1">Large ribosomal subunit protein bL31</fullName>
    </recommendedName>
    <alternativeName>
        <fullName evidence="3">50S ribosomal protein L31</fullName>
    </alternativeName>
</protein>
<sequence>MAKPDIHPKWYPEAKVYCDGEVVMTVGSTQEELHVDVWSGNHPFFTGTQKIIDTEGRVERFMRKYGMSESQGAGGKGNAKKKDEK</sequence>
<keyword id="KW-1185">Reference proteome</keyword>
<keyword id="KW-0687">Ribonucleoprotein</keyword>
<keyword id="KW-0689">Ribosomal protein</keyword>
<keyword id="KW-0694">RNA-binding</keyword>
<keyword id="KW-0699">rRNA-binding</keyword>
<name>RL31_ACAM1</name>
<feature type="chain" id="PRO_1000126540" description="Large ribosomal subunit protein bL31">
    <location>
        <begin position="1"/>
        <end position="85"/>
    </location>
</feature>
<feature type="region of interest" description="Disordered" evidence="2">
    <location>
        <begin position="64"/>
        <end position="85"/>
    </location>
</feature>
<reference key="1">
    <citation type="journal article" date="2008" name="Proc. Natl. Acad. Sci. U.S.A.">
        <title>Niche adaptation and genome expansion in the chlorophyll d-producing cyanobacterium Acaryochloris marina.</title>
        <authorList>
            <person name="Swingley W.D."/>
            <person name="Chen M."/>
            <person name="Cheung P.C."/>
            <person name="Conrad A.L."/>
            <person name="Dejesa L.C."/>
            <person name="Hao J."/>
            <person name="Honchak B.M."/>
            <person name="Karbach L.E."/>
            <person name="Kurdoglu A."/>
            <person name="Lahiri S."/>
            <person name="Mastrian S.D."/>
            <person name="Miyashita H."/>
            <person name="Page L."/>
            <person name="Ramakrishna P."/>
            <person name="Satoh S."/>
            <person name="Sattley W.M."/>
            <person name="Shimada Y."/>
            <person name="Taylor H.L."/>
            <person name="Tomo T."/>
            <person name="Tsuchiya T."/>
            <person name="Wang Z.T."/>
            <person name="Raymond J."/>
            <person name="Mimuro M."/>
            <person name="Blankenship R.E."/>
            <person name="Touchman J.W."/>
        </authorList>
    </citation>
    <scope>NUCLEOTIDE SEQUENCE [LARGE SCALE GENOMIC DNA]</scope>
    <source>
        <strain>MBIC 11017</strain>
    </source>
</reference>
<proteinExistence type="inferred from homology"/>
<dbReference type="EMBL" id="CP000828">
    <property type="protein sequence ID" value="ABW26285.1"/>
    <property type="molecule type" value="Genomic_DNA"/>
</dbReference>
<dbReference type="RefSeq" id="WP_010480591.1">
    <property type="nucleotide sequence ID" value="NC_009925.1"/>
</dbReference>
<dbReference type="STRING" id="329726.AM1_1248"/>
<dbReference type="KEGG" id="amr:AM1_1248"/>
<dbReference type="eggNOG" id="COG0254">
    <property type="taxonomic scope" value="Bacteria"/>
</dbReference>
<dbReference type="HOGENOM" id="CLU_114306_1_2_3"/>
<dbReference type="OrthoDB" id="9803251at2"/>
<dbReference type="Proteomes" id="UP000000268">
    <property type="component" value="Chromosome"/>
</dbReference>
<dbReference type="GO" id="GO:1990904">
    <property type="term" value="C:ribonucleoprotein complex"/>
    <property type="evidence" value="ECO:0007669"/>
    <property type="project" value="UniProtKB-KW"/>
</dbReference>
<dbReference type="GO" id="GO:0005840">
    <property type="term" value="C:ribosome"/>
    <property type="evidence" value="ECO:0007669"/>
    <property type="project" value="UniProtKB-KW"/>
</dbReference>
<dbReference type="GO" id="GO:0019843">
    <property type="term" value="F:rRNA binding"/>
    <property type="evidence" value="ECO:0007669"/>
    <property type="project" value="UniProtKB-KW"/>
</dbReference>
<dbReference type="GO" id="GO:0003735">
    <property type="term" value="F:structural constituent of ribosome"/>
    <property type="evidence" value="ECO:0007669"/>
    <property type="project" value="InterPro"/>
</dbReference>
<dbReference type="GO" id="GO:0006412">
    <property type="term" value="P:translation"/>
    <property type="evidence" value="ECO:0007669"/>
    <property type="project" value="UniProtKB-UniRule"/>
</dbReference>
<dbReference type="Gene3D" id="4.10.830.30">
    <property type="entry name" value="Ribosomal protein L31"/>
    <property type="match status" value="1"/>
</dbReference>
<dbReference type="HAMAP" id="MF_00501">
    <property type="entry name" value="Ribosomal_bL31_1"/>
    <property type="match status" value="1"/>
</dbReference>
<dbReference type="InterPro" id="IPR034704">
    <property type="entry name" value="Ribosomal_bL28/bL31-like_sf"/>
</dbReference>
<dbReference type="InterPro" id="IPR002150">
    <property type="entry name" value="Ribosomal_bL31"/>
</dbReference>
<dbReference type="InterPro" id="IPR027491">
    <property type="entry name" value="Ribosomal_bL31_A"/>
</dbReference>
<dbReference type="InterPro" id="IPR042105">
    <property type="entry name" value="Ribosomal_bL31_sf"/>
</dbReference>
<dbReference type="NCBIfam" id="TIGR00105">
    <property type="entry name" value="L31"/>
    <property type="match status" value="1"/>
</dbReference>
<dbReference type="NCBIfam" id="NF000612">
    <property type="entry name" value="PRK00019.1"/>
    <property type="match status" value="1"/>
</dbReference>
<dbReference type="NCBIfam" id="NF001809">
    <property type="entry name" value="PRK00528.1"/>
    <property type="match status" value="1"/>
</dbReference>
<dbReference type="PANTHER" id="PTHR33280">
    <property type="entry name" value="50S RIBOSOMAL PROTEIN L31, CHLOROPLASTIC"/>
    <property type="match status" value="1"/>
</dbReference>
<dbReference type="PANTHER" id="PTHR33280:SF1">
    <property type="entry name" value="LARGE RIBOSOMAL SUBUNIT PROTEIN BL31C"/>
    <property type="match status" value="1"/>
</dbReference>
<dbReference type="Pfam" id="PF01197">
    <property type="entry name" value="Ribosomal_L31"/>
    <property type="match status" value="1"/>
</dbReference>
<dbReference type="PRINTS" id="PR01249">
    <property type="entry name" value="RIBOSOMALL31"/>
</dbReference>
<dbReference type="SUPFAM" id="SSF143800">
    <property type="entry name" value="L28p-like"/>
    <property type="match status" value="1"/>
</dbReference>
<dbReference type="PROSITE" id="PS01143">
    <property type="entry name" value="RIBOSOMAL_L31"/>
    <property type="match status" value="1"/>
</dbReference>
<accession>B0C425</accession>